<proteinExistence type="evidence at protein level"/>
<keyword id="KW-0025">Alternative splicing</keyword>
<keyword id="KW-0963">Cytoplasm</keyword>
<keyword id="KW-0227">DNA damage</keyword>
<keyword id="KW-0234">DNA repair</keyword>
<keyword id="KW-0238">DNA-binding</keyword>
<keyword id="KW-0539">Nucleus</keyword>
<keyword id="KW-1267">Proteomics identification</keyword>
<keyword id="KW-1185">Reference proteome</keyword>
<feature type="chain" id="PRO_0000280269" description="PCNA-interacting partner">
    <location>
        <begin position="1"/>
        <end position="579"/>
    </location>
</feature>
<feature type="region of interest" description="Disordered" evidence="3">
    <location>
        <begin position="480"/>
        <end position="543"/>
    </location>
</feature>
<feature type="compositionally biased region" description="Basic and acidic residues" evidence="3">
    <location>
        <begin position="486"/>
        <end position="496"/>
    </location>
</feature>
<feature type="splice variant" id="VSP_023587" description="In isoform 5." evidence="7">
    <location>
        <begin position="1"/>
        <end position="285"/>
    </location>
</feature>
<feature type="splice variant" id="VSP_023588" description="In isoform 2." evidence="6 7">
    <location>
        <begin position="1"/>
        <end position="81"/>
    </location>
</feature>
<feature type="splice variant" id="VSP_023589" description="In isoform 4." evidence="7">
    <original>SQLL</original>
    <variation>VSIF</variation>
    <location>
        <begin position="130"/>
        <end position="133"/>
    </location>
</feature>
<feature type="splice variant" id="VSP_023590" description="In isoform 4." evidence="7">
    <location>
        <begin position="134"/>
        <end position="579"/>
    </location>
</feature>
<feature type="splice variant" id="VSP_023591" description="In isoform 3." evidence="7">
    <original>VQLLARK</original>
    <variation>ALPVLKR</variation>
    <location>
        <begin position="166"/>
        <end position="172"/>
    </location>
</feature>
<feature type="splice variant" id="VSP_023592" description="In isoform 3." evidence="7">
    <location>
        <begin position="173"/>
        <end position="579"/>
    </location>
</feature>
<feature type="splice variant" id="VSP_023593" description="In isoform 7." evidence="7">
    <location>
        <begin position="274"/>
        <end position="394"/>
    </location>
</feature>
<feature type="splice variant" id="VSP_023594" description="In isoform 6." evidence="7">
    <original>SIAGGQILSVIKMQLIKGQNSRDP</original>
    <variation>RGCKSICWKINNWNEFWKCSSGQK</variation>
    <location>
        <begin position="274"/>
        <end position="297"/>
    </location>
</feature>
<feature type="splice variant" id="VSP_023595" description="In isoform 6." evidence="7">
    <location>
        <begin position="298"/>
        <end position="579"/>
    </location>
</feature>
<feature type="splice variant" id="VSP_023596" description="In isoform 7." evidence="7">
    <original>MK</original>
    <variation>RV</variation>
    <location>
        <begin position="422"/>
        <end position="423"/>
    </location>
</feature>
<feature type="splice variant" id="VSP_023597" description="In isoform 7." evidence="7">
    <location>
        <begin position="424"/>
        <end position="579"/>
    </location>
</feature>
<feature type="sequence variant" id="VAR_031105" description="In dbSNP:rs12227879.">
    <original>V</original>
    <variation>M</variation>
    <location>
        <position position="400"/>
    </location>
</feature>
<feature type="sequence conflict" description="In Ref. 3; AAH99844." evidence="8" ref="3">
    <original>N</original>
    <variation>K</variation>
    <location>
        <position position="76"/>
    </location>
</feature>
<feature type="sequence conflict" description="In Ref. 3; AAH30962." evidence="8" ref="3">
    <original>P</original>
    <variation>L</variation>
    <location>
        <position position="155"/>
    </location>
</feature>
<feature type="sequence conflict" description="In Ref. 3; AAH98313." evidence="8" ref="3">
    <original>G</original>
    <variation>A</variation>
    <location>
        <position position="322"/>
    </location>
</feature>
<feature type="sequence conflict" description="In Ref. 3; AAH70270." evidence="8" ref="3">
    <original>H</original>
    <variation>R</variation>
    <location>
        <position position="343"/>
    </location>
</feature>
<feature type="sequence conflict" description="In Ref. 1; BAA91306." evidence="8" ref="1">
    <original>N</original>
    <variation>D</variation>
    <location>
        <position position="381"/>
    </location>
</feature>
<feature type="sequence conflict" description="In Ref. 1; BAA91306." evidence="8" ref="1">
    <original>S</original>
    <variation>L</variation>
    <location>
        <position position="403"/>
    </location>
</feature>
<dbReference type="EMBL" id="AK000648">
    <property type="protein sequence ID" value="BAA91306.1"/>
    <property type="molecule type" value="mRNA"/>
</dbReference>
<dbReference type="EMBL" id="AK303571">
    <property type="protein sequence ID" value="BAG64592.1"/>
    <property type="molecule type" value="mRNA"/>
</dbReference>
<dbReference type="EMBL" id="AC087882">
    <property type="status" value="NOT_ANNOTATED_CDS"/>
    <property type="molecule type" value="Genomic_DNA"/>
</dbReference>
<dbReference type="EMBL" id="BC018903">
    <property type="protein sequence ID" value="AAH18903.1"/>
    <property type="status" value="ALT_INIT"/>
    <property type="molecule type" value="mRNA"/>
</dbReference>
<dbReference type="EMBL" id="BC030962">
    <property type="protein sequence ID" value="AAH30962.1"/>
    <property type="status" value="ALT_SEQ"/>
    <property type="molecule type" value="mRNA"/>
</dbReference>
<dbReference type="EMBL" id="BC050696">
    <property type="protein sequence ID" value="AAH50696.1"/>
    <property type="status" value="ALT_INIT"/>
    <property type="molecule type" value="mRNA"/>
</dbReference>
<dbReference type="EMBL" id="BC070270">
    <property type="protein sequence ID" value="AAH70270.1"/>
    <property type="status" value="ALT_SEQ"/>
    <property type="molecule type" value="mRNA"/>
</dbReference>
<dbReference type="EMBL" id="BC098313">
    <property type="protein sequence ID" value="AAH98313.1"/>
    <property type="molecule type" value="mRNA"/>
</dbReference>
<dbReference type="EMBL" id="BC099734">
    <property type="protein sequence ID" value="AAH99734.2"/>
    <property type="molecule type" value="mRNA"/>
</dbReference>
<dbReference type="EMBL" id="BC099844">
    <property type="protein sequence ID" value="AAH99844.2"/>
    <property type="molecule type" value="mRNA"/>
</dbReference>
<dbReference type="CCDS" id="CCDS81729.1">
    <molecule id="Q9NWS1-4"/>
</dbReference>
<dbReference type="CCDS" id="CCDS81730.1">
    <molecule id="Q9NWS1-2"/>
</dbReference>
<dbReference type="CCDS" id="CCDS9090.2">
    <molecule id="Q9NWS1-1"/>
</dbReference>
<dbReference type="RefSeq" id="NP_001306917.1">
    <property type="nucleotide sequence ID" value="NM_001319988.1"/>
</dbReference>
<dbReference type="RefSeq" id="NP_001306922.1">
    <molecule id="Q9NWS1-2"/>
    <property type="nucleotide sequence ID" value="NM_001319993.2"/>
</dbReference>
<dbReference type="RefSeq" id="NP_001306923.1">
    <molecule id="Q9NWS1-2"/>
    <property type="nucleotide sequence ID" value="NM_001319994.2"/>
</dbReference>
<dbReference type="RefSeq" id="NP_001306924.1">
    <property type="nucleotide sequence ID" value="NM_001319995.1"/>
</dbReference>
<dbReference type="RefSeq" id="NP_001306925.1">
    <molecule id="Q9NWS1-4"/>
    <property type="nucleotide sequence ID" value="NM_001319996.2"/>
</dbReference>
<dbReference type="RefSeq" id="NP_001369660.1">
    <molecule id="Q9NWS1-7"/>
    <property type="nucleotide sequence ID" value="NM_001382731.1"/>
</dbReference>
<dbReference type="RefSeq" id="NP_001369661.1">
    <molecule id="Q9NWS1-6"/>
    <property type="nucleotide sequence ID" value="NM_001382732.1"/>
</dbReference>
<dbReference type="RefSeq" id="NP_001387833.1">
    <molecule id="Q9NWS1-3"/>
    <property type="nucleotide sequence ID" value="NM_001400904.1"/>
</dbReference>
<dbReference type="RefSeq" id="NP_001387834.1">
    <molecule id="Q9NWS1-3"/>
    <property type="nucleotide sequence ID" value="NM_001400905.1"/>
</dbReference>
<dbReference type="RefSeq" id="NP_001387856.1">
    <molecule id="Q9NWS1-4"/>
    <property type="nucleotide sequence ID" value="NM_001400927.1"/>
</dbReference>
<dbReference type="RefSeq" id="NP_060385.3">
    <molecule id="Q9NWS1-1"/>
    <property type="nucleotide sequence ID" value="NM_017915.5"/>
</dbReference>
<dbReference type="RefSeq" id="XP_011536816.1">
    <molecule id="Q9NWS1-2"/>
    <property type="nucleotide sequence ID" value="XM_011538514.3"/>
</dbReference>
<dbReference type="RefSeq" id="XP_016875024.1">
    <property type="nucleotide sequence ID" value="XM_017019535.1"/>
</dbReference>
<dbReference type="RefSeq" id="XP_016875032.1">
    <property type="nucleotide sequence ID" value="XM_017019543.1"/>
</dbReference>
<dbReference type="RefSeq" id="XP_016875033.1">
    <property type="nucleotide sequence ID" value="XM_017019544.1"/>
</dbReference>
<dbReference type="RefSeq" id="XP_054228343.1">
    <molecule id="Q9NWS1-2"/>
    <property type="nucleotide sequence ID" value="XM_054372368.1"/>
</dbReference>
<dbReference type="BioGRID" id="120342">
    <property type="interactions" value="16"/>
</dbReference>
<dbReference type="FunCoup" id="Q9NWS1">
    <property type="interactions" value="1478"/>
</dbReference>
<dbReference type="IntAct" id="Q9NWS1">
    <property type="interactions" value="6"/>
</dbReference>
<dbReference type="MINT" id="Q9NWS1"/>
<dbReference type="STRING" id="9606.ENSP00000440850"/>
<dbReference type="GlyGen" id="Q9NWS1">
    <property type="glycosylation" value="1 site, 1 O-linked glycan (1 site)"/>
</dbReference>
<dbReference type="iPTMnet" id="Q9NWS1"/>
<dbReference type="PhosphoSitePlus" id="Q9NWS1"/>
<dbReference type="BioMuta" id="PARPBP"/>
<dbReference type="DMDM" id="308153618"/>
<dbReference type="jPOST" id="Q9NWS1"/>
<dbReference type="MassIVE" id="Q9NWS1"/>
<dbReference type="PaxDb" id="9606-ENSP00000332915"/>
<dbReference type="PeptideAtlas" id="Q9NWS1"/>
<dbReference type="ProteomicsDB" id="82965">
    <molecule id="Q9NWS1-1"/>
</dbReference>
<dbReference type="ProteomicsDB" id="82966">
    <molecule id="Q9NWS1-2"/>
</dbReference>
<dbReference type="ProteomicsDB" id="82967">
    <molecule id="Q9NWS1-3"/>
</dbReference>
<dbReference type="ProteomicsDB" id="82968">
    <molecule id="Q9NWS1-4"/>
</dbReference>
<dbReference type="ProteomicsDB" id="82969">
    <molecule id="Q9NWS1-5"/>
</dbReference>
<dbReference type="ProteomicsDB" id="82970">
    <molecule id="Q9NWS1-6"/>
</dbReference>
<dbReference type="ProteomicsDB" id="82971">
    <molecule id="Q9NWS1-7"/>
</dbReference>
<dbReference type="Antibodypedia" id="49085">
    <property type="antibodies" value="84 antibodies from 14 providers"/>
</dbReference>
<dbReference type="DNASU" id="55010"/>
<dbReference type="Ensembl" id="ENST00000327680.7">
    <molecule id="Q9NWS1-1"/>
    <property type="protein sequence ID" value="ENSP00000332915.3"/>
    <property type="gene ID" value="ENSG00000185480.12"/>
</dbReference>
<dbReference type="Ensembl" id="ENST00000392911.6">
    <molecule id="Q9NWS1-2"/>
    <property type="protein sequence ID" value="ENSP00000376643.2"/>
    <property type="gene ID" value="ENSG00000185480.12"/>
</dbReference>
<dbReference type="Ensembl" id="ENST00000537257.5">
    <molecule id="Q9NWS1-4"/>
    <property type="protein sequence ID" value="ENSP00000442549.1"/>
    <property type="gene ID" value="ENSG00000185480.12"/>
</dbReference>
<dbReference type="GeneID" id="55010"/>
<dbReference type="KEGG" id="hsa:55010"/>
<dbReference type="MANE-Select" id="ENST00000327680.7">
    <property type="protein sequence ID" value="ENSP00000332915.3"/>
    <property type="RefSeq nucleotide sequence ID" value="NM_017915.5"/>
    <property type="RefSeq protein sequence ID" value="NP_060385.3"/>
</dbReference>
<dbReference type="UCSC" id="uc001tjd.4">
    <molecule id="Q9NWS1-1"/>
    <property type="organism name" value="human"/>
</dbReference>
<dbReference type="AGR" id="HGNC:26074"/>
<dbReference type="CTD" id="55010"/>
<dbReference type="DisGeNET" id="55010"/>
<dbReference type="GeneCards" id="PARPBP"/>
<dbReference type="HGNC" id="HGNC:26074">
    <property type="gene designation" value="PARPBP"/>
</dbReference>
<dbReference type="HPA" id="ENSG00000185480">
    <property type="expression patterns" value="Tissue enhanced (bone marrow, lymphoid tissue)"/>
</dbReference>
<dbReference type="MIM" id="613687">
    <property type="type" value="gene"/>
</dbReference>
<dbReference type="neXtProt" id="NX_Q9NWS1"/>
<dbReference type="OpenTargets" id="ENSG00000185480"/>
<dbReference type="PharmGKB" id="PA143485378"/>
<dbReference type="VEuPathDB" id="HostDB:ENSG00000185480"/>
<dbReference type="eggNOG" id="ENOG502QR2U">
    <property type="taxonomic scope" value="Eukaryota"/>
</dbReference>
<dbReference type="GeneTree" id="ENSGT00390000006088"/>
<dbReference type="HOGENOM" id="CLU_120746_0_0_1"/>
<dbReference type="InParanoid" id="Q9NWS1"/>
<dbReference type="OrthoDB" id="6427080at2759"/>
<dbReference type="PAN-GO" id="Q9NWS1">
    <property type="GO annotations" value="2 GO annotations based on evolutionary models"/>
</dbReference>
<dbReference type="PhylomeDB" id="Q9NWS1"/>
<dbReference type="TreeFam" id="TF332230"/>
<dbReference type="PathwayCommons" id="Q9NWS1"/>
<dbReference type="SignaLink" id="Q9NWS1"/>
<dbReference type="BioGRID-ORCS" id="55010">
    <property type="hits" value="15 hits in 1162 CRISPR screens"/>
</dbReference>
<dbReference type="ChiTaRS" id="PARPBP">
    <property type="organism name" value="human"/>
</dbReference>
<dbReference type="GenomeRNAi" id="55010"/>
<dbReference type="Pharos" id="Q9NWS1">
    <property type="development level" value="Tbio"/>
</dbReference>
<dbReference type="PRO" id="PR:Q9NWS1"/>
<dbReference type="Proteomes" id="UP000005640">
    <property type="component" value="Chromosome 12"/>
</dbReference>
<dbReference type="RNAct" id="Q9NWS1">
    <property type="molecule type" value="protein"/>
</dbReference>
<dbReference type="Bgee" id="ENSG00000185480">
    <property type="expression patterns" value="Expressed in primordial germ cell in gonad and 110 other cell types or tissues"/>
</dbReference>
<dbReference type="ExpressionAtlas" id="Q9NWS1">
    <property type="expression patterns" value="baseline and differential"/>
</dbReference>
<dbReference type="GO" id="GO:0000785">
    <property type="term" value="C:chromatin"/>
    <property type="evidence" value="ECO:0000314"/>
    <property type="project" value="UniProtKB"/>
</dbReference>
<dbReference type="GO" id="GO:0005737">
    <property type="term" value="C:cytoplasm"/>
    <property type="evidence" value="ECO:0007669"/>
    <property type="project" value="UniProtKB-SubCell"/>
</dbReference>
<dbReference type="GO" id="GO:0005654">
    <property type="term" value="C:nucleoplasm"/>
    <property type="evidence" value="ECO:0000314"/>
    <property type="project" value="HPA"/>
</dbReference>
<dbReference type="GO" id="GO:0003677">
    <property type="term" value="F:DNA binding"/>
    <property type="evidence" value="ECO:0007669"/>
    <property type="project" value="UniProtKB-KW"/>
</dbReference>
<dbReference type="GO" id="GO:0006281">
    <property type="term" value="P:DNA repair"/>
    <property type="evidence" value="ECO:0007669"/>
    <property type="project" value="UniProtKB-KW"/>
</dbReference>
<dbReference type="GO" id="GO:2000042">
    <property type="term" value="P:negative regulation of double-strand break repair via homologous recombination"/>
    <property type="evidence" value="ECO:0000315"/>
    <property type="project" value="UniProtKB"/>
</dbReference>
<dbReference type="FunFam" id="1.10.486.10:FF:000004">
    <property type="entry name" value="PCNA-interacting partner isoform X3"/>
    <property type="match status" value="1"/>
</dbReference>
<dbReference type="Gene3D" id="1.10.486.10">
    <property type="entry name" value="PCRA, domain 4"/>
    <property type="match status" value="1"/>
</dbReference>
<dbReference type="InterPro" id="IPR027417">
    <property type="entry name" value="P-loop_NTPase"/>
</dbReference>
<dbReference type="InterPro" id="IPR038932">
    <property type="entry name" value="PARPBP"/>
</dbReference>
<dbReference type="PANTHER" id="PTHR32121">
    <property type="entry name" value="PCNA-INTERACTING PARTNER"/>
    <property type="match status" value="1"/>
</dbReference>
<dbReference type="PANTHER" id="PTHR32121:SF0">
    <property type="entry name" value="PCNA-INTERACTING PARTNER"/>
    <property type="match status" value="1"/>
</dbReference>
<dbReference type="SUPFAM" id="SSF52540">
    <property type="entry name" value="P-loop containing nucleoside triphosphate hydrolases"/>
    <property type="match status" value="1"/>
</dbReference>
<evidence type="ECO:0000250" key="1"/>
<evidence type="ECO:0000250" key="2">
    <source>
        <dbReference type="UniProtKB" id="Q6IRT3"/>
    </source>
</evidence>
<evidence type="ECO:0000256" key="3">
    <source>
        <dbReference type="SAM" id="MobiDB-lite"/>
    </source>
</evidence>
<evidence type="ECO:0000269" key="4">
    <source>
    </source>
</evidence>
<evidence type="ECO:0000269" key="5">
    <source>
    </source>
</evidence>
<evidence type="ECO:0000303" key="6">
    <source>
    </source>
</evidence>
<evidence type="ECO:0000303" key="7">
    <source>
    </source>
</evidence>
<evidence type="ECO:0000305" key="8"/>
<protein>
    <recommendedName>
        <fullName>PCNA-interacting partner</fullName>
        <shortName>PARI</shortName>
    </recommendedName>
    <alternativeName>
        <fullName>PARP-1 binding protein</fullName>
    </alternativeName>
    <alternativeName>
        <fullName>PARP1-binding protein</fullName>
        <shortName>PARPBP</shortName>
    </alternativeName>
</protein>
<name>PARI_HUMAN</name>
<organism>
    <name type="scientific">Homo sapiens</name>
    <name type="common">Human</name>
    <dbReference type="NCBI Taxonomy" id="9606"/>
    <lineage>
        <taxon>Eukaryota</taxon>
        <taxon>Metazoa</taxon>
        <taxon>Chordata</taxon>
        <taxon>Craniata</taxon>
        <taxon>Vertebrata</taxon>
        <taxon>Euteleostomi</taxon>
        <taxon>Mammalia</taxon>
        <taxon>Eutheria</taxon>
        <taxon>Euarchontoglires</taxon>
        <taxon>Primates</taxon>
        <taxon>Haplorrhini</taxon>
        <taxon>Catarrhini</taxon>
        <taxon>Hominidae</taxon>
        <taxon>Homo</taxon>
    </lineage>
</organism>
<accession>Q9NWS1</accession>
<accession>B4E0Y0</accession>
<accession>Q05C00</accession>
<accession>Q499L8</accession>
<accession>Q4FZA0</accession>
<accession>Q4KMW7</accession>
<accession>Q6NSC6</accession>
<accession>Q6PJA1</accession>
<accession>Q86W36</accession>
<reference key="1">
    <citation type="journal article" date="2004" name="Nat. Genet.">
        <title>Complete sequencing and characterization of 21,243 full-length human cDNAs.</title>
        <authorList>
            <person name="Ota T."/>
            <person name="Suzuki Y."/>
            <person name="Nishikawa T."/>
            <person name="Otsuki T."/>
            <person name="Sugiyama T."/>
            <person name="Irie R."/>
            <person name="Wakamatsu A."/>
            <person name="Hayashi K."/>
            <person name="Sato H."/>
            <person name="Nagai K."/>
            <person name="Kimura K."/>
            <person name="Makita H."/>
            <person name="Sekine M."/>
            <person name="Obayashi M."/>
            <person name="Nishi T."/>
            <person name="Shibahara T."/>
            <person name="Tanaka T."/>
            <person name="Ishii S."/>
            <person name="Yamamoto J."/>
            <person name="Saito K."/>
            <person name="Kawai Y."/>
            <person name="Isono Y."/>
            <person name="Nakamura Y."/>
            <person name="Nagahari K."/>
            <person name="Murakami K."/>
            <person name="Yasuda T."/>
            <person name="Iwayanagi T."/>
            <person name="Wagatsuma M."/>
            <person name="Shiratori A."/>
            <person name="Sudo H."/>
            <person name="Hosoiri T."/>
            <person name="Kaku Y."/>
            <person name="Kodaira H."/>
            <person name="Kondo H."/>
            <person name="Sugawara M."/>
            <person name="Takahashi M."/>
            <person name="Kanda K."/>
            <person name="Yokoi T."/>
            <person name="Furuya T."/>
            <person name="Kikkawa E."/>
            <person name="Omura Y."/>
            <person name="Abe K."/>
            <person name="Kamihara K."/>
            <person name="Katsuta N."/>
            <person name="Sato K."/>
            <person name="Tanikawa M."/>
            <person name="Yamazaki M."/>
            <person name="Ninomiya K."/>
            <person name="Ishibashi T."/>
            <person name="Yamashita H."/>
            <person name="Murakawa K."/>
            <person name="Fujimori K."/>
            <person name="Tanai H."/>
            <person name="Kimata M."/>
            <person name="Watanabe M."/>
            <person name="Hiraoka S."/>
            <person name="Chiba Y."/>
            <person name="Ishida S."/>
            <person name="Ono Y."/>
            <person name="Takiguchi S."/>
            <person name="Watanabe S."/>
            <person name="Yosida M."/>
            <person name="Hotuta T."/>
            <person name="Kusano J."/>
            <person name="Kanehori K."/>
            <person name="Takahashi-Fujii A."/>
            <person name="Hara H."/>
            <person name="Tanase T.-O."/>
            <person name="Nomura Y."/>
            <person name="Togiya S."/>
            <person name="Komai F."/>
            <person name="Hara R."/>
            <person name="Takeuchi K."/>
            <person name="Arita M."/>
            <person name="Imose N."/>
            <person name="Musashino K."/>
            <person name="Yuuki H."/>
            <person name="Oshima A."/>
            <person name="Sasaki N."/>
            <person name="Aotsuka S."/>
            <person name="Yoshikawa Y."/>
            <person name="Matsunawa H."/>
            <person name="Ichihara T."/>
            <person name="Shiohata N."/>
            <person name="Sano S."/>
            <person name="Moriya S."/>
            <person name="Momiyama H."/>
            <person name="Satoh N."/>
            <person name="Takami S."/>
            <person name="Terashima Y."/>
            <person name="Suzuki O."/>
            <person name="Nakagawa S."/>
            <person name="Senoh A."/>
            <person name="Mizoguchi H."/>
            <person name="Goto Y."/>
            <person name="Shimizu F."/>
            <person name="Wakebe H."/>
            <person name="Hishigaki H."/>
            <person name="Watanabe T."/>
            <person name="Sugiyama A."/>
            <person name="Takemoto M."/>
            <person name="Kawakami B."/>
            <person name="Yamazaki M."/>
            <person name="Watanabe K."/>
            <person name="Kumagai A."/>
            <person name="Itakura S."/>
            <person name="Fukuzumi Y."/>
            <person name="Fujimori Y."/>
            <person name="Komiyama M."/>
            <person name="Tashiro H."/>
            <person name="Tanigami A."/>
            <person name="Fujiwara T."/>
            <person name="Ono T."/>
            <person name="Yamada K."/>
            <person name="Fujii Y."/>
            <person name="Ozaki K."/>
            <person name="Hirao M."/>
            <person name="Ohmori Y."/>
            <person name="Kawabata A."/>
            <person name="Hikiji T."/>
            <person name="Kobatake N."/>
            <person name="Inagaki H."/>
            <person name="Ikema Y."/>
            <person name="Okamoto S."/>
            <person name="Okitani R."/>
            <person name="Kawakami T."/>
            <person name="Noguchi S."/>
            <person name="Itoh T."/>
            <person name="Shigeta K."/>
            <person name="Senba T."/>
            <person name="Matsumura K."/>
            <person name="Nakajima Y."/>
            <person name="Mizuno T."/>
            <person name="Morinaga M."/>
            <person name="Sasaki M."/>
            <person name="Togashi T."/>
            <person name="Oyama M."/>
            <person name="Hata H."/>
            <person name="Watanabe M."/>
            <person name="Komatsu T."/>
            <person name="Mizushima-Sugano J."/>
            <person name="Satoh T."/>
            <person name="Shirai Y."/>
            <person name="Takahashi Y."/>
            <person name="Nakagawa K."/>
            <person name="Okumura K."/>
            <person name="Nagase T."/>
            <person name="Nomura N."/>
            <person name="Kikuchi H."/>
            <person name="Masuho Y."/>
            <person name="Yamashita R."/>
            <person name="Nakai K."/>
            <person name="Yada T."/>
            <person name="Nakamura Y."/>
            <person name="Ohara O."/>
            <person name="Isogai T."/>
            <person name="Sugano S."/>
        </authorList>
    </citation>
    <scope>NUCLEOTIDE SEQUENCE [LARGE SCALE MRNA] (ISOFORMS 1 AND 2)</scope>
    <source>
        <tissue>Thymus</tissue>
    </source>
</reference>
<reference key="2">
    <citation type="journal article" date="2006" name="Nature">
        <title>The finished DNA sequence of human chromosome 12.</title>
        <authorList>
            <person name="Scherer S.E."/>
            <person name="Muzny D.M."/>
            <person name="Buhay C.J."/>
            <person name="Chen R."/>
            <person name="Cree A."/>
            <person name="Ding Y."/>
            <person name="Dugan-Rocha S."/>
            <person name="Gill R."/>
            <person name="Gunaratne P."/>
            <person name="Harris R.A."/>
            <person name="Hawes A.C."/>
            <person name="Hernandez J."/>
            <person name="Hodgson A.V."/>
            <person name="Hume J."/>
            <person name="Jackson A."/>
            <person name="Khan Z.M."/>
            <person name="Kovar-Smith C."/>
            <person name="Lewis L.R."/>
            <person name="Lozado R.J."/>
            <person name="Metzker M.L."/>
            <person name="Milosavljevic A."/>
            <person name="Miner G.R."/>
            <person name="Montgomery K.T."/>
            <person name="Morgan M.B."/>
            <person name="Nazareth L.V."/>
            <person name="Scott G."/>
            <person name="Sodergren E."/>
            <person name="Song X.-Z."/>
            <person name="Steffen D."/>
            <person name="Lovering R.C."/>
            <person name="Wheeler D.A."/>
            <person name="Worley K.C."/>
            <person name="Yuan Y."/>
            <person name="Zhang Z."/>
            <person name="Adams C.Q."/>
            <person name="Ansari-Lari M.A."/>
            <person name="Ayele M."/>
            <person name="Brown M.J."/>
            <person name="Chen G."/>
            <person name="Chen Z."/>
            <person name="Clerc-Blankenburg K.P."/>
            <person name="Davis C."/>
            <person name="Delgado O."/>
            <person name="Dinh H.H."/>
            <person name="Draper H."/>
            <person name="Gonzalez-Garay M.L."/>
            <person name="Havlak P."/>
            <person name="Jackson L.R."/>
            <person name="Jacob L.S."/>
            <person name="Kelly S.H."/>
            <person name="Li L."/>
            <person name="Li Z."/>
            <person name="Liu J."/>
            <person name="Liu W."/>
            <person name="Lu J."/>
            <person name="Maheshwari M."/>
            <person name="Nguyen B.-V."/>
            <person name="Okwuonu G.O."/>
            <person name="Pasternak S."/>
            <person name="Perez L.M."/>
            <person name="Plopper F.J.H."/>
            <person name="Santibanez J."/>
            <person name="Shen H."/>
            <person name="Tabor P.E."/>
            <person name="Verduzco D."/>
            <person name="Waldron L."/>
            <person name="Wang Q."/>
            <person name="Williams G.A."/>
            <person name="Zhang J."/>
            <person name="Zhou J."/>
            <person name="Allen C.C."/>
            <person name="Amin A.G."/>
            <person name="Anyalebechi V."/>
            <person name="Bailey M."/>
            <person name="Barbaria J.A."/>
            <person name="Bimage K.E."/>
            <person name="Bryant N.P."/>
            <person name="Burch P.E."/>
            <person name="Burkett C.E."/>
            <person name="Burrell K.L."/>
            <person name="Calderon E."/>
            <person name="Cardenas V."/>
            <person name="Carter K."/>
            <person name="Casias K."/>
            <person name="Cavazos I."/>
            <person name="Cavazos S.R."/>
            <person name="Ceasar H."/>
            <person name="Chacko J."/>
            <person name="Chan S.N."/>
            <person name="Chavez D."/>
            <person name="Christopoulos C."/>
            <person name="Chu J."/>
            <person name="Cockrell R."/>
            <person name="Cox C.D."/>
            <person name="Dang M."/>
            <person name="Dathorne S.R."/>
            <person name="David R."/>
            <person name="Davis C.M."/>
            <person name="Davy-Carroll L."/>
            <person name="Deshazo D.R."/>
            <person name="Donlin J.E."/>
            <person name="D'Souza L."/>
            <person name="Eaves K.A."/>
            <person name="Egan A."/>
            <person name="Emery-Cohen A.J."/>
            <person name="Escotto M."/>
            <person name="Flagg N."/>
            <person name="Forbes L.D."/>
            <person name="Gabisi A.M."/>
            <person name="Garza M."/>
            <person name="Hamilton C."/>
            <person name="Henderson N."/>
            <person name="Hernandez O."/>
            <person name="Hines S."/>
            <person name="Hogues M.E."/>
            <person name="Huang M."/>
            <person name="Idlebird D.G."/>
            <person name="Johnson R."/>
            <person name="Jolivet A."/>
            <person name="Jones S."/>
            <person name="Kagan R."/>
            <person name="King L.M."/>
            <person name="Leal B."/>
            <person name="Lebow H."/>
            <person name="Lee S."/>
            <person name="LeVan J.M."/>
            <person name="Lewis L.C."/>
            <person name="London P."/>
            <person name="Lorensuhewa L.M."/>
            <person name="Loulseged H."/>
            <person name="Lovett D.A."/>
            <person name="Lucier A."/>
            <person name="Lucier R.L."/>
            <person name="Ma J."/>
            <person name="Madu R.C."/>
            <person name="Mapua P."/>
            <person name="Martindale A.D."/>
            <person name="Martinez E."/>
            <person name="Massey E."/>
            <person name="Mawhiney S."/>
            <person name="Meador M.G."/>
            <person name="Mendez S."/>
            <person name="Mercado C."/>
            <person name="Mercado I.C."/>
            <person name="Merritt C.E."/>
            <person name="Miner Z.L."/>
            <person name="Minja E."/>
            <person name="Mitchell T."/>
            <person name="Mohabbat F."/>
            <person name="Mohabbat K."/>
            <person name="Montgomery B."/>
            <person name="Moore N."/>
            <person name="Morris S."/>
            <person name="Munidasa M."/>
            <person name="Ngo R.N."/>
            <person name="Nguyen N.B."/>
            <person name="Nickerson E."/>
            <person name="Nwaokelemeh O.O."/>
            <person name="Nwokenkwo S."/>
            <person name="Obregon M."/>
            <person name="Oguh M."/>
            <person name="Oragunye N."/>
            <person name="Oviedo R.J."/>
            <person name="Parish B.J."/>
            <person name="Parker D.N."/>
            <person name="Parrish J."/>
            <person name="Parks K.L."/>
            <person name="Paul H.A."/>
            <person name="Payton B.A."/>
            <person name="Perez A."/>
            <person name="Perrin W."/>
            <person name="Pickens A."/>
            <person name="Primus E.L."/>
            <person name="Pu L.-L."/>
            <person name="Puazo M."/>
            <person name="Quiles M.M."/>
            <person name="Quiroz J.B."/>
            <person name="Rabata D."/>
            <person name="Reeves K."/>
            <person name="Ruiz S.J."/>
            <person name="Shao H."/>
            <person name="Sisson I."/>
            <person name="Sonaike T."/>
            <person name="Sorelle R.P."/>
            <person name="Sutton A.E."/>
            <person name="Svatek A.F."/>
            <person name="Svetz L.A."/>
            <person name="Tamerisa K.S."/>
            <person name="Taylor T.R."/>
            <person name="Teague B."/>
            <person name="Thomas N."/>
            <person name="Thorn R.D."/>
            <person name="Trejos Z.Y."/>
            <person name="Trevino B.K."/>
            <person name="Ukegbu O.N."/>
            <person name="Urban J.B."/>
            <person name="Vasquez L.I."/>
            <person name="Vera V.A."/>
            <person name="Villasana D.M."/>
            <person name="Wang L."/>
            <person name="Ward-Moore S."/>
            <person name="Warren J.T."/>
            <person name="Wei X."/>
            <person name="White F."/>
            <person name="Williamson A.L."/>
            <person name="Wleczyk R."/>
            <person name="Wooden H.S."/>
            <person name="Wooden S.H."/>
            <person name="Yen J."/>
            <person name="Yoon L."/>
            <person name="Yoon V."/>
            <person name="Zorrilla S.E."/>
            <person name="Nelson D."/>
            <person name="Kucherlapati R."/>
            <person name="Weinstock G."/>
            <person name="Gibbs R.A."/>
        </authorList>
    </citation>
    <scope>NUCLEOTIDE SEQUENCE [LARGE SCALE GENOMIC DNA]</scope>
</reference>
<reference key="3">
    <citation type="journal article" date="2004" name="Genome Res.">
        <title>The status, quality, and expansion of the NIH full-length cDNA project: the Mammalian Gene Collection (MGC).</title>
        <authorList>
            <consortium name="The MGC Project Team"/>
        </authorList>
    </citation>
    <scope>NUCLEOTIDE SEQUENCE [LARGE SCALE MRNA] (ISOFORMS 4 AND 5)</scope>
    <scope>NUCLEOTIDE SEQUENCE [LARGE SCALE MRNA] OF 1-416 (ISOFORM 1)</scope>
    <scope>NUCLEOTIDE SEQUENCE [LARGE SCALE MRNA] OF 1-501 (ISOFORM 2)</scope>
    <scope>NUCLEOTIDE SEQUENCE [LARGE SCALE MRNA] OF 30-579 (ISOFORM 3)</scope>
    <scope>NUCLEOTIDE SEQUENCE [LARGE SCALE MRNA] OF 34-579 (ISOFORMS 6 AND 7)</scope>
    <source>
        <tissue>Ovary</tissue>
        <tissue>Testis</tissue>
    </source>
</reference>
<reference key="4">
    <citation type="journal article" date="2011" name="Genes Chromosomes Cancer">
        <title>C12orf48, termed PARP-1 binding protein, enhances poly(ADP-ribose) polymerase-1 (PARP-1) activity and protects pancreatic cancer cells from DNA damage.</title>
        <authorList>
            <person name="Piao L."/>
            <person name="Nakagawa H."/>
            <person name="Ueda K."/>
            <person name="Chung S."/>
            <person name="Kashiwaya K."/>
            <person name="Eguchi H."/>
            <person name="Ohigashi H."/>
            <person name="Ishikawa O."/>
            <person name="Daigo Y."/>
            <person name="Matsuda K."/>
            <person name="Nakamura Y."/>
        </authorList>
    </citation>
    <scope>FUNCTION</scope>
    <scope>SUBCELLULAR LOCATION</scope>
    <scope>TISSUE SPECIFICITY</scope>
    <scope>INTERACTION WITH PARP1</scope>
</reference>
<reference key="5">
    <citation type="journal article" date="2012" name="Mol. Cell">
        <title>Inhibition of homologous recombination by the PCNA-interacting protein PARI.</title>
        <authorList>
            <person name="Moldovan G.L."/>
            <person name="Dejsuphong D."/>
            <person name="Petalcorin M.I."/>
            <person name="Hofmann K."/>
            <person name="Takeda S."/>
            <person name="Boulton S.J."/>
            <person name="D'Andrea A.D."/>
        </authorList>
    </citation>
    <scope>FUNCTION</scope>
    <scope>SUBCELLULAR LOCATION</scope>
    <scope>INTERACTION WITH RAD51 AND PCNA</scope>
</reference>
<gene>
    <name type="primary">PARPBP</name>
    <name type="synonym">C12orf48</name>
    <name type="synonym">PARI</name>
</gene>
<comment type="function">
    <text evidence="4 5">Required to suppress inappropriate homologous recombination, thereby playing a central role DNA repair and in the maintenance of genomic stability. Antagonizes homologous recombination by interfering with the formation of the RAD51-DNA homologous recombination structure. Binds single-strand DNA and poly(A) homopolymers. Positively regulate the poly(ADP-ribosyl)ation activity of PARP1; however such function may be indirect.</text>
</comment>
<comment type="subunit">
    <text evidence="2 4 5">Interacts with RAD51 and PCNA (PubMed:22153967). Interacts with PARP1 (PubMed:20931645). Interacts with TASOR (By similarity).</text>
</comment>
<comment type="subcellular location">
    <subcellularLocation>
        <location evidence="1">Cytoplasm</location>
    </subcellularLocation>
    <subcellularLocation>
        <location evidence="4 5">Nucleus</location>
    </subcellularLocation>
    <text>Localizes to chromatin in response to S phase arrest but not in mitosis. Targeted to chromatin via its interaction with PCNA.</text>
</comment>
<comment type="alternative products">
    <event type="alternative splicing"/>
    <isoform>
        <id>Q9NWS1-1</id>
        <name>1</name>
        <sequence type="displayed"/>
    </isoform>
    <isoform>
        <id>Q9NWS1-2</id>
        <name>2</name>
        <sequence type="described" ref="VSP_023588"/>
    </isoform>
    <isoform>
        <id>Q9NWS1-3</id>
        <name>3</name>
        <sequence type="described" ref="VSP_023591 VSP_023592"/>
    </isoform>
    <isoform>
        <id>Q9NWS1-4</id>
        <name>4</name>
        <sequence type="described" ref="VSP_023589 VSP_023590"/>
    </isoform>
    <isoform>
        <id>Q9NWS1-5</id>
        <name>5</name>
        <sequence type="described" ref="VSP_023587"/>
    </isoform>
    <isoform>
        <id>Q9NWS1-6</id>
        <name>6</name>
        <sequence type="described" ref="VSP_023594 VSP_023595"/>
    </isoform>
    <isoform>
        <id>Q9NWS1-7</id>
        <name>7</name>
        <sequence type="described" ref="VSP_023593 VSP_023596 VSP_023597"/>
    </isoform>
</comment>
<comment type="tissue specificity">
    <text evidence="4">Restricted to testis. Overexpressed in multiple cancer cells.</text>
</comment>
<comment type="domain">
    <text evidence="4">Although it shares some sequence similarity with SRS2 yeast helicase, does not contain a functional ATPase domain suggesting it has no helicase activity.</text>
</comment>
<comment type="similarity">
    <text evidence="8">Belongs to the PARI family.</text>
</comment>
<comment type="sequence caution" evidence="8">
    <conflict type="erroneous initiation">
        <sequence resource="EMBL-CDS" id="AAH18903"/>
    </conflict>
    <text>Truncated N-terminus.</text>
</comment>
<comment type="sequence caution" evidence="8">
    <conflict type="miscellaneous discrepancy">
        <sequence resource="EMBL-CDS" id="AAH30962"/>
    </conflict>
    <text>Contaminating sequence. Potential poly-A sequence.</text>
</comment>
<comment type="sequence caution" evidence="8">
    <conflict type="erroneous initiation">
        <sequence resource="EMBL-CDS" id="AAH50696"/>
    </conflict>
    <text>Truncated N-terminus.</text>
</comment>
<comment type="sequence caution" evidence="8">
    <conflict type="erroneous initiation">
        <sequence resource="EMBL-CDS" id="AAH70270"/>
    </conflict>
    <text>Truncated N-terminus.</text>
</comment>
<comment type="sequence caution" evidence="8">
    <conflict type="miscellaneous discrepancy">
        <sequence resource="EMBL-CDS" id="AAH70270"/>
    </conflict>
    <text>Contaminating sequence. Potential poly-A sequence.</text>
</comment>
<sequence length="579" mass="65054">MAVFNQKSVSDMIKEFRKNWRALCNSERTTLCGADSMLLALQLSMAENNKQHSGEFTVSLSDVLLTWKYLLHEKLNLPVENMDVTDHYEDVRKIYDDFLKNSNMLDLIDVYQKCRALTSNCENYNTVSPSQLLDFLSGKQYAVGDETDLSIPTSPTSKYNRDNEKVQLLARKIIFSYLNLLVNSKNDLAVAYILNIPDRGLGREAFTDLKHAAREKQMSIFLVATSFIRTIELGGKGYAPPPSDPLRTHVKGLSNFINFIDKLDEILGEIPNPSIAGGQILSVIKMQLIKGQNSRDPFCKAIEEVAQDLDLRIKNIINSQEGVVALSTTDISPARPKSHAINHGTAYCGRDTVKALLVLLDEEAANAPTKNKAELLYDEENTIHHHGTSILTLFRSPTQVNNSIKPLRERICVSMQEKKIKMKQTLIRSQFACTYKDDYMISKDNWNNVNLASKPLCVLYMENDLSEGVNPSVGRSTIGTSFGNVHLDRSKNEKVSRKSTSQTGNKSSKRKQVDLDGENILCDNRNEPPQHKNAKIPKKSNDSQNRLYGKLAKVAKSNKCTAKDKLISGQAKLTQFFRL</sequence>